<dbReference type="EC" id="5.1.3.1" evidence="2"/>
<dbReference type="EMBL" id="AF015274">
    <property type="protein sequence ID" value="AAD09954.1"/>
    <property type="molecule type" value="mRNA"/>
</dbReference>
<dbReference type="EMBL" id="AB010073">
    <property type="protein sequence ID" value="BAB08496.1"/>
    <property type="molecule type" value="Genomic_DNA"/>
</dbReference>
<dbReference type="EMBL" id="CP002688">
    <property type="protein sequence ID" value="AED97463.1"/>
    <property type="molecule type" value="Genomic_DNA"/>
</dbReference>
<dbReference type="EMBL" id="CP002688">
    <property type="protein sequence ID" value="AED97464.1"/>
    <property type="molecule type" value="Genomic_DNA"/>
</dbReference>
<dbReference type="EMBL" id="AY045855">
    <property type="protein sequence ID" value="AAK76529.1"/>
    <property type="molecule type" value="mRNA"/>
</dbReference>
<dbReference type="EMBL" id="AY091381">
    <property type="protein sequence ID" value="AAM14320.1"/>
    <property type="molecule type" value="mRNA"/>
</dbReference>
<dbReference type="EMBL" id="AK319163">
    <property type="protein sequence ID" value="BAH57278.1"/>
    <property type="molecule type" value="mRNA"/>
</dbReference>
<dbReference type="RefSeq" id="NP_200949.1">
    <property type="nucleotide sequence ID" value="NM_125534.4"/>
</dbReference>
<dbReference type="RefSeq" id="NP_851240.1">
    <property type="nucleotide sequence ID" value="NM_180909.3"/>
</dbReference>
<dbReference type="SMR" id="Q9SAU2"/>
<dbReference type="FunCoup" id="Q9SAU2">
    <property type="interactions" value="1521"/>
</dbReference>
<dbReference type="IntAct" id="Q9SAU2">
    <property type="interactions" value="1"/>
</dbReference>
<dbReference type="STRING" id="3702.Q9SAU2"/>
<dbReference type="PaxDb" id="3702-AT5G61410.1"/>
<dbReference type="ProMEX" id="Q9SAU2"/>
<dbReference type="ProteomicsDB" id="174983"/>
<dbReference type="EnsemblPlants" id="AT5G61410.1">
    <property type="protein sequence ID" value="AT5G61410.1"/>
    <property type="gene ID" value="AT5G61410"/>
</dbReference>
<dbReference type="EnsemblPlants" id="AT5G61410.2">
    <property type="protein sequence ID" value="AT5G61410.2"/>
    <property type="gene ID" value="AT5G61410"/>
</dbReference>
<dbReference type="GeneID" id="836262"/>
<dbReference type="Gramene" id="AT5G61410.1">
    <property type="protein sequence ID" value="AT5G61410.1"/>
    <property type="gene ID" value="AT5G61410"/>
</dbReference>
<dbReference type="Gramene" id="AT5G61410.2">
    <property type="protein sequence ID" value="AT5G61410.2"/>
    <property type="gene ID" value="AT5G61410"/>
</dbReference>
<dbReference type="KEGG" id="ath:AT5G61410"/>
<dbReference type="Araport" id="AT5G61410"/>
<dbReference type="TAIR" id="AT5G61410">
    <property type="gene designation" value="RPE"/>
</dbReference>
<dbReference type="eggNOG" id="KOG3111">
    <property type="taxonomic scope" value="Eukaryota"/>
</dbReference>
<dbReference type="HOGENOM" id="CLU_054856_1_1_1"/>
<dbReference type="InParanoid" id="Q9SAU2"/>
<dbReference type="OMA" id="EMISVHY"/>
<dbReference type="OrthoDB" id="1927044at2759"/>
<dbReference type="PhylomeDB" id="Q9SAU2"/>
<dbReference type="BioCyc" id="ARA:AT5G61410-MONOMER"/>
<dbReference type="UniPathway" id="UPA00116"/>
<dbReference type="PRO" id="PR:Q9SAU2"/>
<dbReference type="Proteomes" id="UP000006548">
    <property type="component" value="Chromosome 5"/>
</dbReference>
<dbReference type="ExpressionAtlas" id="Q9SAU2">
    <property type="expression patterns" value="baseline and differential"/>
</dbReference>
<dbReference type="GO" id="GO:0048046">
    <property type="term" value="C:apoplast"/>
    <property type="evidence" value="ECO:0007005"/>
    <property type="project" value="TAIR"/>
</dbReference>
<dbReference type="GO" id="GO:0009507">
    <property type="term" value="C:chloroplast"/>
    <property type="evidence" value="ECO:0007005"/>
    <property type="project" value="TAIR"/>
</dbReference>
<dbReference type="GO" id="GO:0009941">
    <property type="term" value="C:chloroplast envelope"/>
    <property type="evidence" value="ECO:0007005"/>
    <property type="project" value="TAIR"/>
</dbReference>
<dbReference type="GO" id="GO:0009570">
    <property type="term" value="C:chloroplast stroma"/>
    <property type="evidence" value="ECO:0007005"/>
    <property type="project" value="TAIR"/>
</dbReference>
<dbReference type="GO" id="GO:0009535">
    <property type="term" value="C:chloroplast thylakoid membrane"/>
    <property type="evidence" value="ECO:0007669"/>
    <property type="project" value="UniProtKB-SubCell"/>
</dbReference>
<dbReference type="GO" id="GO:0009536">
    <property type="term" value="C:plastid"/>
    <property type="evidence" value="ECO:0007005"/>
    <property type="project" value="TAIR"/>
</dbReference>
<dbReference type="GO" id="GO:0010319">
    <property type="term" value="C:stromule"/>
    <property type="evidence" value="ECO:0000314"/>
    <property type="project" value="TAIR"/>
</dbReference>
<dbReference type="GO" id="GO:0009579">
    <property type="term" value="C:thylakoid"/>
    <property type="evidence" value="ECO:0007005"/>
    <property type="project" value="TAIR"/>
</dbReference>
<dbReference type="GO" id="GO:0004750">
    <property type="term" value="F:D-ribulose-phosphate 3-epimerase activity"/>
    <property type="evidence" value="ECO:0007669"/>
    <property type="project" value="UniProtKB-EC"/>
</dbReference>
<dbReference type="GO" id="GO:0046872">
    <property type="term" value="F:metal ion binding"/>
    <property type="evidence" value="ECO:0007669"/>
    <property type="project" value="UniProtKB-KW"/>
</dbReference>
<dbReference type="GO" id="GO:0006098">
    <property type="term" value="P:pentose-phosphate shunt"/>
    <property type="evidence" value="ECO:0007669"/>
    <property type="project" value="InterPro"/>
</dbReference>
<dbReference type="GO" id="GO:0019253">
    <property type="term" value="P:reductive pentose-phosphate cycle"/>
    <property type="evidence" value="ECO:0007669"/>
    <property type="project" value="UniProtKB-UniPathway"/>
</dbReference>
<dbReference type="GO" id="GO:0009409">
    <property type="term" value="P:response to cold"/>
    <property type="evidence" value="ECO:0000270"/>
    <property type="project" value="TAIR"/>
</dbReference>
<dbReference type="GO" id="GO:0009624">
    <property type="term" value="P:response to nematode"/>
    <property type="evidence" value="ECO:0000315"/>
    <property type="project" value="TAIR"/>
</dbReference>
<dbReference type="CDD" id="cd00429">
    <property type="entry name" value="RPE"/>
    <property type="match status" value="1"/>
</dbReference>
<dbReference type="FunFam" id="3.20.20.70:FF:000004">
    <property type="entry name" value="Ribulose-phosphate 3-epimerase"/>
    <property type="match status" value="1"/>
</dbReference>
<dbReference type="Gene3D" id="3.20.20.70">
    <property type="entry name" value="Aldolase class I"/>
    <property type="match status" value="1"/>
</dbReference>
<dbReference type="HAMAP" id="MF_02227">
    <property type="entry name" value="RPE"/>
    <property type="match status" value="1"/>
</dbReference>
<dbReference type="InterPro" id="IPR013785">
    <property type="entry name" value="Aldolase_TIM"/>
</dbReference>
<dbReference type="InterPro" id="IPR026019">
    <property type="entry name" value="Ribul_P_3_epim"/>
</dbReference>
<dbReference type="InterPro" id="IPR000056">
    <property type="entry name" value="Ribul_P_3_epim-like"/>
</dbReference>
<dbReference type="InterPro" id="IPR011060">
    <property type="entry name" value="RibuloseP-bd_barrel"/>
</dbReference>
<dbReference type="NCBIfam" id="NF004076">
    <property type="entry name" value="PRK05581.1-4"/>
    <property type="match status" value="1"/>
</dbReference>
<dbReference type="NCBIfam" id="TIGR01163">
    <property type="entry name" value="rpe"/>
    <property type="match status" value="1"/>
</dbReference>
<dbReference type="PANTHER" id="PTHR11749">
    <property type="entry name" value="RIBULOSE-5-PHOSPHATE-3-EPIMERASE"/>
    <property type="match status" value="1"/>
</dbReference>
<dbReference type="Pfam" id="PF00834">
    <property type="entry name" value="Ribul_P_3_epim"/>
    <property type="match status" value="1"/>
</dbReference>
<dbReference type="SUPFAM" id="SSF51366">
    <property type="entry name" value="Ribulose-phoshate binding barrel"/>
    <property type="match status" value="1"/>
</dbReference>
<dbReference type="PROSITE" id="PS01085">
    <property type="entry name" value="RIBUL_P_3_EPIMER_1"/>
    <property type="match status" value="1"/>
</dbReference>
<dbReference type="PROSITE" id="PS01086">
    <property type="entry name" value="RIBUL_P_3_EPIMER_2"/>
    <property type="match status" value="1"/>
</dbReference>
<evidence type="ECO:0000250" key="1">
    <source>
        <dbReference type="UniProtKB" id="P32719"/>
    </source>
</evidence>
<evidence type="ECO:0000250" key="2">
    <source>
        <dbReference type="UniProtKB" id="Q43157"/>
    </source>
</evidence>
<evidence type="ECO:0000250" key="3">
    <source>
        <dbReference type="UniProtKB" id="Q96AT9"/>
    </source>
</evidence>
<evidence type="ECO:0000255" key="4"/>
<evidence type="ECO:0000269" key="5">
    <source>
    </source>
</evidence>
<evidence type="ECO:0000269" key="6">
    <source>
    </source>
</evidence>
<evidence type="ECO:0000303" key="7">
    <source>
    </source>
</evidence>
<evidence type="ECO:0000303" key="8">
    <source>
    </source>
</evidence>
<evidence type="ECO:0000305" key="9"/>
<evidence type="ECO:0000312" key="10">
    <source>
        <dbReference type="Araport" id="AT5G61410"/>
    </source>
</evidence>
<evidence type="ECO:0000312" key="11">
    <source>
        <dbReference type="EMBL" id="BAB08496.1"/>
    </source>
</evidence>
<sequence>MSTSAASLCCSSTQVNGFGLRPERSLLYQPTSFSFSRRRTHGIVKASSRVDRFSKSDIIVSPSILSANFAKLGEQVKAVELAGCDWIHVDVMDGRFVPNITIGPLVVDALRPVTDLPLDVHLMIVEPEQRVPDFIKAGADIVSVHCEQQSTIHLHRTVNQIKSLGAKAGVVLNPGTPLSAIEYVLDMVDLVLIMSVNPGFGGQSFIESQVKKISDLRKMCAEKGVNPWIEVDGGVTPANAYKVIEAGANALVAGSAVFGAKDYAEAIKGIKASKRPAAVAV</sequence>
<protein>
    <recommendedName>
        <fullName evidence="8">Ribulose-5-phosphate-3-epimerase, chloroplastic</fullName>
        <shortName evidence="8">R5P3E</shortName>
        <ecNumber evidence="2">5.1.3.1</ecNumber>
    </recommendedName>
    <alternativeName>
        <fullName evidence="9">Pentose-5-phosphate 3-epimerase</fullName>
    </alternativeName>
    <alternativeName>
        <fullName evidence="7">Protein EMBRYO DEFECTIVE 2728</fullName>
    </alternativeName>
</protein>
<accession>Q9SAU2</accession>
<accession>C0Z3J9</accession>
<comment type="function">
    <text evidence="2 5 6">Essential protein required during embryogenesis (PubMed:15266054). Catalyzes the reversible epimerization of D-ribulose 5-phosphate to D-xylulose 5-phosphate (By similarity). Essential for the early steps of nematode feeding sites (NFS, multinucleated root cells) formation induced by the root-knot nematodes Heterodera schachtii, Meloidogyne incognita, M.javanica and M.hapla (PubMed:9843485).</text>
</comment>
<comment type="catalytic activity">
    <reaction evidence="2">
        <text>D-ribulose 5-phosphate = D-xylulose 5-phosphate</text>
        <dbReference type="Rhea" id="RHEA:13677"/>
        <dbReference type="ChEBI" id="CHEBI:57737"/>
        <dbReference type="ChEBI" id="CHEBI:58121"/>
        <dbReference type="EC" id="5.1.3.1"/>
    </reaction>
</comment>
<comment type="cofactor">
    <cofactor evidence="3">
        <name>Co(2+)</name>
        <dbReference type="ChEBI" id="CHEBI:48828"/>
    </cofactor>
    <cofactor evidence="3">
        <name>Fe(2+)</name>
        <dbReference type="ChEBI" id="CHEBI:29033"/>
    </cofactor>
    <cofactor evidence="3">
        <name>Mn(2+)</name>
        <dbReference type="ChEBI" id="CHEBI:29035"/>
    </cofactor>
    <cofactor evidence="3">
        <name>Zn(2+)</name>
        <dbReference type="ChEBI" id="CHEBI:29105"/>
    </cofactor>
    <text evidence="3">Binds 1 divalent metal cation per subunit. Active with Co(2+), Fe(2+), Mn(2+) and Zn(2+).</text>
</comment>
<comment type="pathway">
    <text evidence="2">Carbohydrate biosynthesis; Calvin cycle.</text>
</comment>
<comment type="subunit">
    <text evidence="2">Homooctamer.</text>
</comment>
<comment type="subcellular location">
    <subcellularLocation>
        <location evidence="2">Plastid</location>
        <location evidence="2">Chloroplast thylakoid membrane</location>
    </subcellularLocation>
</comment>
<comment type="tissue specificity">
    <text evidence="6">Present in roots, seeds and flowers (PubMed:9843485). Accumulates in nematode feeding sites (NFS) (PubMed:9843485).</text>
</comment>
<comment type="developmental stage">
    <text evidence="6">During root development, expressed in the meristems, in part of the elongation zone, in which cells divide and expand, and initiation sites of lateral roots (PubMed:9843485). In mature embryos from dry seeds, observed in the zone corresponding to the root apical meristem and in cotyledons (PubMed:9843485).</text>
</comment>
<comment type="induction">
    <text evidence="6">Induced by both root-knot and cyst nematodes when nematode feeding sites (NFS, giant cells) are developed and form galls.</text>
</comment>
<comment type="disruption phenotype">
    <text evidence="5 6">Defective embryo arrested at cotyledon stage (PubMed:15266054). Reduced germination capacity, leading to the development of some dwarf seedlings unable to grow on soil (PubMed:9843485). Reduced sensitivity to nematodes associated with reduced number of cysts and limited number of galls upon infection with Meloidogyne incognita and Heterodera schachtii (PubMed:9843485).</text>
</comment>
<comment type="similarity">
    <text evidence="9">Belongs to the ribulose-phosphate 3-epimerase family.</text>
</comment>
<comment type="online information" name="Seed defective Arabidopsis mutants">
    <link uri="http://seedgenes.org/MutantList"/>
</comment>
<organism>
    <name type="scientific">Arabidopsis thaliana</name>
    <name type="common">Mouse-ear cress</name>
    <dbReference type="NCBI Taxonomy" id="3702"/>
    <lineage>
        <taxon>Eukaryota</taxon>
        <taxon>Viridiplantae</taxon>
        <taxon>Streptophyta</taxon>
        <taxon>Embryophyta</taxon>
        <taxon>Tracheophyta</taxon>
        <taxon>Spermatophyta</taxon>
        <taxon>Magnoliopsida</taxon>
        <taxon>eudicotyledons</taxon>
        <taxon>Gunneridae</taxon>
        <taxon>Pentapetalae</taxon>
        <taxon>rosids</taxon>
        <taxon>malvids</taxon>
        <taxon>Brassicales</taxon>
        <taxon>Brassicaceae</taxon>
        <taxon>Camelineae</taxon>
        <taxon>Arabidopsis</taxon>
    </lineage>
</organism>
<proteinExistence type="evidence at transcript level"/>
<name>RPE_ARATH</name>
<feature type="transit peptide" description="Chloroplast" evidence="4">
    <location>
        <begin position="1"/>
        <end position="45"/>
    </location>
</feature>
<feature type="chain" id="PRO_0000448241" description="Ribulose-5-phosphate-3-epimerase, chloroplastic" evidence="4">
    <location>
        <begin position="46"/>
        <end position="281"/>
    </location>
</feature>
<feature type="active site" description="Proton acceptor" evidence="1">
    <location>
        <position position="90"/>
    </location>
</feature>
<feature type="active site" description="Proton donor" evidence="1">
    <location>
        <position position="232"/>
    </location>
</feature>
<feature type="binding site" evidence="1">
    <location>
        <position position="63"/>
    </location>
    <ligand>
        <name>substrate</name>
    </ligand>
</feature>
<feature type="binding site" evidence="1">
    <location>
        <position position="88"/>
    </location>
    <ligand>
        <name>a divalent metal cation</name>
        <dbReference type="ChEBI" id="CHEBI:60240"/>
    </ligand>
</feature>
<feature type="binding site" evidence="1">
    <location>
        <position position="90"/>
    </location>
    <ligand>
        <name>a divalent metal cation</name>
        <dbReference type="ChEBI" id="CHEBI:60240"/>
    </ligand>
</feature>
<feature type="binding site" evidence="1">
    <location>
        <position position="121"/>
    </location>
    <ligand>
        <name>a divalent metal cation</name>
        <dbReference type="ChEBI" id="CHEBI:60240"/>
    </ligand>
</feature>
<feature type="binding site" evidence="1">
    <location>
        <position position="121"/>
    </location>
    <ligand>
        <name>substrate</name>
    </ligand>
</feature>
<feature type="binding site" evidence="1">
    <location>
        <begin position="199"/>
        <end position="202"/>
    </location>
    <ligand>
        <name>substrate</name>
    </ligand>
</feature>
<feature type="binding site" evidence="1">
    <location>
        <begin position="232"/>
        <end position="234"/>
    </location>
    <ligand>
        <name>substrate</name>
    </ligand>
</feature>
<feature type="binding site" evidence="1">
    <location>
        <position position="232"/>
    </location>
    <ligand>
        <name>a divalent metal cation</name>
        <dbReference type="ChEBI" id="CHEBI:60240"/>
    </ligand>
</feature>
<feature type="binding site" evidence="1">
    <location>
        <begin position="254"/>
        <end position="256"/>
    </location>
    <ligand>
        <name>substrate</name>
    </ligand>
</feature>
<reference key="1">
    <citation type="journal article" date="1998" name="EMBO J.">
        <title>RPE, a plant gene involved in early developmental steps of nematode feeding cells.</title>
        <authorList>
            <person name="Favery B."/>
            <person name="Lecomte P."/>
            <person name="Gil N."/>
            <person name="Bechtold N."/>
            <person name="Bouchez D."/>
            <person name="Dalmasso A."/>
            <person name="Abad P."/>
        </authorList>
    </citation>
    <scope>NUCLEOTIDE SEQUENCE [MRNA]</scope>
    <scope>FUNCTION</scope>
    <scope>DISRUPTION PHENOTYPE</scope>
    <scope>INDUCTION BY NEMATODES</scope>
    <scope>TISSUE SPECIFICITY</scope>
    <scope>DEVELOPMENTAL STAGE</scope>
    <source>
        <strain>cv. Wassilewskija</strain>
    </source>
</reference>
<reference key="2">
    <citation type="journal article" date="1998" name="DNA Res.">
        <title>Structural analysis of Arabidopsis thaliana chromosome 5. IV. Sequence features of the regions of 1,456,315 bp covered by nineteen physically assigned P1 and TAC clones.</title>
        <authorList>
            <person name="Sato S."/>
            <person name="Kaneko T."/>
            <person name="Kotani H."/>
            <person name="Nakamura Y."/>
            <person name="Asamizu E."/>
            <person name="Miyajima N."/>
            <person name="Tabata S."/>
        </authorList>
    </citation>
    <scope>NUCLEOTIDE SEQUENCE [LARGE SCALE GENOMIC DNA]</scope>
    <source>
        <strain>cv. Columbia</strain>
    </source>
</reference>
<reference key="3">
    <citation type="journal article" date="2017" name="Plant J.">
        <title>Araport11: a complete reannotation of the Arabidopsis thaliana reference genome.</title>
        <authorList>
            <person name="Cheng C.Y."/>
            <person name="Krishnakumar V."/>
            <person name="Chan A.P."/>
            <person name="Thibaud-Nissen F."/>
            <person name="Schobel S."/>
            <person name="Town C.D."/>
        </authorList>
    </citation>
    <scope>GENOME REANNOTATION</scope>
    <source>
        <strain>cv. Columbia</strain>
    </source>
</reference>
<reference key="4">
    <citation type="journal article" date="2003" name="Science">
        <title>Empirical analysis of transcriptional activity in the Arabidopsis genome.</title>
        <authorList>
            <person name="Yamada K."/>
            <person name="Lim J."/>
            <person name="Dale J.M."/>
            <person name="Chen H."/>
            <person name="Shinn P."/>
            <person name="Palm C.J."/>
            <person name="Southwick A.M."/>
            <person name="Wu H.C."/>
            <person name="Kim C.J."/>
            <person name="Nguyen M."/>
            <person name="Pham P.K."/>
            <person name="Cheuk R.F."/>
            <person name="Karlin-Newmann G."/>
            <person name="Liu S.X."/>
            <person name="Lam B."/>
            <person name="Sakano H."/>
            <person name="Wu T."/>
            <person name="Yu G."/>
            <person name="Miranda M."/>
            <person name="Quach H.L."/>
            <person name="Tripp M."/>
            <person name="Chang C.H."/>
            <person name="Lee J.M."/>
            <person name="Toriumi M.J."/>
            <person name="Chan M.M."/>
            <person name="Tang C.C."/>
            <person name="Onodera C.S."/>
            <person name="Deng J.M."/>
            <person name="Akiyama K."/>
            <person name="Ansari Y."/>
            <person name="Arakawa T."/>
            <person name="Banh J."/>
            <person name="Banno F."/>
            <person name="Bowser L."/>
            <person name="Brooks S.Y."/>
            <person name="Carninci P."/>
            <person name="Chao Q."/>
            <person name="Choy N."/>
            <person name="Enju A."/>
            <person name="Goldsmith A.D."/>
            <person name="Gurjal M."/>
            <person name="Hansen N.F."/>
            <person name="Hayashizaki Y."/>
            <person name="Johnson-Hopson C."/>
            <person name="Hsuan V.W."/>
            <person name="Iida K."/>
            <person name="Karnes M."/>
            <person name="Khan S."/>
            <person name="Koesema E."/>
            <person name="Ishida J."/>
            <person name="Jiang P.X."/>
            <person name="Jones T."/>
            <person name="Kawai J."/>
            <person name="Kamiya A."/>
            <person name="Meyers C."/>
            <person name="Nakajima M."/>
            <person name="Narusaka M."/>
            <person name="Seki M."/>
            <person name="Sakurai T."/>
            <person name="Satou M."/>
            <person name="Tamse R."/>
            <person name="Vaysberg M."/>
            <person name="Wallender E.K."/>
            <person name="Wong C."/>
            <person name="Yamamura Y."/>
            <person name="Yuan S."/>
            <person name="Shinozaki K."/>
            <person name="Davis R.W."/>
            <person name="Theologis A."/>
            <person name="Ecker J.R."/>
        </authorList>
    </citation>
    <scope>NUCLEOTIDE SEQUENCE [LARGE SCALE MRNA]</scope>
    <source>
        <strain>cv. Columbia</strain>
    </source>
</reference>
<reference key="5">
    <citation type="journal article" date="2009" name="DNA Res.">
        <title>Analysis of multiple occurrences of alternative splicing events in Arabidopsis thaliana using novel sequenced full-length cDNAs.</title>
        <authorList>
            <person name="Iida K."/>
            <person name="Fukami-Kobayashi K."/>
            <person name="Toyoda A."/>
            <person name="Sakaki Y."/>
            <person name="Kobayashi M."/>
            <person name="Seki M."/>
            <person name="Shinozaki K."/>
        </authorList>
    </citation>
    <scope>NUCLEOTIDE SEQUENCE [LARGE SCALE MRNA] OF 50-281</scope>
    <source>
        <strain>cv. Columbia</strain>
        <tissue>Flower</tissue>
        <tissue>Silique</tissue>
    </source>
</reference>
<reference key="6">
    <citation type="journal article" date="2004" name="Plant Physiol.">
        <title>Identification of genes required for embryo development in Arabidopsis.</title>
        <authorList>
            <person name="Tzafrir I."/>
            <person name="Pena-Muralla R."/>
            <person name="Dickerman A."/>
            <person name="Berg M."/>
            <person name="Rogers R."/>
            <person name="Hutchens S."/>
            <person name="Sweeney T.C."/>
            <person name="McElver J."/>
            <person name="Aux G."/>
            <person name="Patton D."/>
            <person name="Meinke D."/>
        </authorList>
    </citation>
    <scope>FUNCTION [LARGE SCALE ANALYSIS]</scope>
    <scope>DISRUPTION PHENOTYPE [LARGE SCALE ANALYSIS]</scope>
    <source>
        <strain>cv. Columbia</strain>
    </source>
</reference>
<keyword id="KW-0150">Chloroplast</keyword>
<keyword id="KW-0413">Isomerase</keyword>
<keyword id="KW-0472">Membrane</keyword>
<keyword id="KW-0479">Metal-binding</keyword>
<keyword id="KW-0934">Plastid</keyword>
<keyword id="KW-1185">Reference proteome</keyword>
<keyword id="KW-0793">Thylakoid</keyword>
<keyword id="KW-0809">Transit peptide</keyword>
<gene>
    <name evidence="8" type="primary">RPE</name>
    <name evidence="7" type="synonym">EMB2728</name>
    <name evidence="10" type="ordered locus">At5g61410</name>
    <name evidence="11" type="ORF">MFB13.19</name>
</gene>